<evidence type="ECO:0000255" key="1">
    <source>
        <dbReference type="HAMAP-Rule" id="MF_02001"/>
    </source>
</evidence>
<evidence type="ECO:0000255" key="2">
    <source>
        <dbReference type="PROSITE-ProRule" id="PRU00285"/>
    </source>
</evidence>
<protein>
    <recommendedName>
        <fullName evidence="1">Small heat shock protein IbpB</fullName>
    </recommendedName>
    <alternativeName>
        <fullName evidence="1">16 kDa heat shock protein B</fullName>
    </alternativeName>
</protein>
<proteinExistence type="inferred from homology"/>
<reference key="1">
    <citation type="journal article" date="2011" name="J. Bacteriol.">
        <title>Comparative genomics of 28 Salmonella enterica isolates: evidence for CRISPR-mediated adaptive sublineage evolution.</title>
        <authorList>
            <person name="Fricke W.F."/>
            <person name="Mammel M.K."/>
            <person name="McDermott P.F."/>
            <person name="Tartera C."/>
            <person name="White D.G."/>
            <person name="Leclerc J.E."/>
            <person name="Ravel J."/>
            <person name="Cebula T.A."/>
        </authorList>
    </citation>
    <scope>NUCLEOTIDE SEQUENCE [LARGE SCALE GENOMIC DNA]</scope>
    <source>
        <strain>SL476</strain>
    </source>
</reference>
<comment type="function">
    <text evidence="1">Associates with aggregated proteins, together with IbpA, to stabilize and protect them from irreversible denaturation and extensive proteolysis during heat shock and oxidative stress. Aggregated proteins bound to the IbpAB complex are more efficiently refolded and reactivated by the ATP-dependent chaperone systems ClpB and DnaK/DnaJ/GrpE. Its activity is ATP-independent.</text>
</comment>
<comment type="subunit">
    <text evidence="1">Homodimer. Forms homomultimers of about 100-150 subunits at optimal growth temperatures. Conformation changes to oligomers at high temperatures or high ionic concentrations. The decrease in size of the multimers is accompanied by an increase in chaperone activity.</text>
</comment>
<comment type="subcellular location">
    <subcellularLocation>
        <location evidence="1">Cytoplasm</location>
    </subcellularLocation>
</comment>
<comment type="domain">
    <text evidence="1">The N- and C-terminal flexible termini are involved in oligomerization and in the binding of non-native substrate proteins, and are essential for chaperone activity.</text>
</comment>
<comment type="similarity">
    <text evidence="1 2">Belongs to the small heat shock protein (HSP20) family.</text>
</comment>
<name>IBPB_SALHS</name>
<organism>
    <name type="scientific">Salmonella heidelberg (strain SL476)</name>
    <dbReference type="NCBI Taxonomy" id="454169"/>
    <lineage>
        <taxon>Bacteria</taxon>
        <taxon>Pseudomonadati</taxon>
        <taxon>Pseudomonadota</taxon>
        <taxon>Gammaproteobacteria</taxon>
        <taxon>Enterobacterales</taxon>
        <taxon>Enterobacteriaceae</taxon>
        <taxon>Salmonella</taxon>
    </lineage>
</organism>
<dbReference type="EMBL" id="CP001120">
    <property type="protein sequence ID" value="ACF68929.1"/>
    <property type="molecule type" value="Genomic_DNA"/>
</dbReference>
<dbReference type="RefSeq" id="WP_001246919.1">
    <property type="nucleotide sequence ID" value="NC_011083.1"/>
</dbReference>
<dbReference type="SMR" id="B4TA60"/>
<dbReference type="KEGG" id="seh:SeHA_C4139"/>
<dbReference type="HOGENOM" id="CLU_046737_4_2_6"/>
<dbReference type="Proteomes" id="UP000001866">
    <property type="component" value="Chromosome"/>
</dbReference>
<dbReference type="GO" id="GO:0005737">
    <property type="term" value="C:cytoplasm"/>
    <property type="evidence" value="ECO:0007669"/>
    <property type="project" value="UniProtKB-SubCell"/>
</dbReference>
<dbReference type="GO" id="GO:0050821">
    <property type="term" value="P:protein stabilization"/>
    <property type="evidence" value="ECO:0007669"/>
    <property type="project" value="UniProtKB-UniRule"/>
</dbReference>
<dbReference type="CDD" id="cd06470">
    <property type="entry name" value="ACD_IbpA-B_like"/>
    <property type="match status" value="1"/>
</dbReference>
<dbReference type="Gene3D" id="2.60.40.790">
    <property type="match status" value="1"/>
</dbReference>
<dbReference type="HAMAP" id="MF_02001">
    <property type="entry name" value="HSP20_IbpB"/>
    <property type="match status" value="1"/>
</dbReference>
<dbReference type="InterPro" id="IPR002068">
    <property type="entry name" value="A-crystallin/Hsp20_dom"/>
</dbReference>
<dbReference type="InterPro" id="IPR037913">
    <property type="entry name" value="ACD_IbpA/B"/>
</dbReference>
<dbReference type="InterPro" id="IPR008978">
    <property type="entry name" value="HSP20-like_chaperone"/>
</dbReference>
<dbReference type="InterPro" id="IPR022848">
    <property type="entry name" value="HSP20_IbpB"/>
</dbReference>
<dbReference type="NCBIfam" id="NF008618">
    <property type="entry name" value="PRK11597.1"/>
    <property type="match status" value="1"/>
</dbReference>
<dbReference type="PANTHER" id="PTHR47062">
    <property type="match status" value="1"/>
</dbReference>
<dbReference type="PANTHER" id="PTHR47062:SF2">
    <property type="entry name" value="SMALL HEAT SHOCK PROTEIN IBPB"/>
    <property type="match status" value="1"/>
</dbReference>
<dbReference type="Pfam" id="PF00011">
    <property type="entry name" value="HSP20"/>
    <property type="match status" value="1"/>
</dbReference>
<dbReference type="SUPFAM" id="SSF49764">
    <property type="entry name" value="HSP20-like chaperones"/>
    <property type="match status" value="1"/>
</dbReference>
<dbReference type="PROSITE" id="PS01031">
    <property type="entry name" value="SHSP"/>
    <property type="match status" value="1"/>
</dbReference>
<feature type="chain" id="PRO_1000189109" description="Small heat shock protein IbpB">
    <location>
        <begin position="1"/>
        <end position="142"/>
    </location>
</feature>
<feature type="domain" description="sHSP" evidence="2">
    <location>
        <begin position="26"/>
        <end position="137"/>
    </location>
</feature>
<keyword id="KW-0143">Chaperone</keyword>
<keyword id="KW-0963">Cytoplasm</keyword>
<keyword id="KW-0346">Stress response</keyword>
<gene>
    <name evidence="1" type="primary">ibpB</name>
    <name type="ordered locus">SeHA_C4139</name>
</gene>
<accession>B4TA60</accession>
<sequence>MRNYDLSPLLRQWIGFDKLANALQNSGESQSFPPYNIEKSDDNHYRITLALAGFRQEDLDIQLEGTRLTVKGTPEQPENEPKWLHQGLVMQPFSLSFTLAENMEVSGATFTNGLLHIDLTRNEPETIAPQRIAINERSALNS</sequence>